<accession>B5Z7H0</accession>
<name>ACPS_HELPG</name>
<gene>
    <name evidence="1" type="primary">acpS</name>
    <name type="ordered locus">HPG27_764</name>
</gene>
<evidence type="ECO:0000255" key="1">
    <source>
        <dbReference type="HAMAP-Rule" id="MF_00101"/>
    </source>
</evidence>
<feature type="chain" id="PRO_1000093881" description="Holo-[acyl-carrier-protein] synthase">
    <location>
        <begin position="1"/>
        <end position="119"/>
    </location>
</feature>
<feature type="binding site" evidence="1">
    <location>
        <position position="5"/>
    </location>
    <ligand>
        <name>Mg(2+)</name>
        <dbReference type="ChEBI" id="CHEBI:18420"/>
    </ligand>
</feature>
<feature type="binding site" evidence="1">
    <location>
        <position position="51"/>
    </location>
    <ligand>
        <name>Mg(2+)</name>
        <dbReference type="ChEBI" id="CHEBI:18420"/>
    </ligand>
</feature>
<organism>
    <name type="scientific">Helicobacter pylori (strain G27)</name>
    <dbReference type="NCBI Taxonomy" id="563041"/>
    <lineage>
        <taxon>Bacteria</taxon>
        <taxon>Pseudomonadati</taxon>
        <taxon>Campylobacterota</taxon>
        <taxon>Epsilonproteobacteria</taxon>
        <taxon>Campylobacterales</taxon>
        <taxon>Helicobacteraceae</taxon>
        <taxon>Helicobacter</taxon>
    </lineage>
</organism>
<reference key="1">
    <citation type="journal article" date="2009" name="J. Bacteriol.">
        <title>The complete genome sequence of Helicobacter pylori strain G27.</title>
        <authorList>
            <person name="Baltrus D.A."/>
            <person name="Amieva M.R."/>
            <person name="Covacci A."/>
            <person name="Lowe T.M."/>
            <person name="Merrell D.S."/>
            <person name="Ottemann K.M."/>
            <person name="Stein M."/>
            <person name="Salama N.R."/>
            <person name="Guillemin K."/>
        </authorList>
    </citation>
    <scope>NUCLEOTIDE SEQUENCE [LARGE SCALE GENOMIC DNA]</scope>
    <source>
        <strain>G27</strain>
    </source>
</reference>
<keyword id="KW-0963">Cytoplasm</keyword>
<keyword id="KW-0275">Fatty acid biosynthesis</keyword>
<keyword id="KW-0276">Fatty acid metabolism</keyword>
<keyword id="KW-0444">Lipid biosynthesis</keyword>
<keyword id="KW-0443">Lipid metabolism</keyword>
<keyword id="KW-0460">Magnesium</keyword>
<keyword id="KW-0479">Metal-binding</keyword>
<keyword id="KW-1185">Reference proteome</keyword>
<keyword id="KW-0808">Transferase</keyword>
<protein>
    <recommendedName>
        <fullName evidence="1">Holo-[acyl-carrier-protein] synthase</fullName>
        <shortName evidence="1">Holo-ACP synthase</shortName>
        <ecNumber evidence="1">2.7.8.7</ecNumber>
    </recommendedName>
    <alternativeName>
        <fullName evidence="1">4'-phosphopantetheinyl transferase AcpS</fullName>
    </alternativeName>
</protein>
<comment type="function">
    <text evidence="1">Transfers the 4'-phosphopantetheine moiety from coenzyme A to a Ser of acyl-carrier-protein.</text>
</comment>
<comment type="catalytic activity">
    <reaction evidence="1">
        <text>apo-[ACP] + CoA = holo-[ACP] + adenosine 3',5'-bisphosphate + H(+)</text>
        <dbReference type="Rhea" id="RHEA:12068"/>
        <dbReference type="Rhea" id="RHEA-COMP:9685"/>
        <dbReference type="Rhea" id="RHEA-COMP:9690"/>
        <dbReference type="ChEBI" id="CHEBI:15378"/>
        <dbReference type="ChEBI" id="CHEBI:29999"/>
        <dbReference type="ChEBI" id="CHEBI:57287"/>
        <dbReference type="ChEBI" id="CHEBI:58343"/>
        <dbReference type="ChEBI" id="CHEBI:64479"/>
        <dbReference type="EC" id="2.7.8.7"/>
    </reaction>
</comment>
<comment type="cofactor">
    <cofactor evidence="1">
        <name>Mg(2+)</name>
        <dbReference type="ChEBI" id="CHEBI:18420"/>
    </cofactor>
</comment>
<comment type="subcellular location">
    <subcellularLocation>
        <location evidence="1">Cytoplasm</location>
    </subcellularLocation>
</comment>
<comment type="similarity">
    <text evidence="1">Belongs to the P-Pant transferase superfamily. AcpS family.</text>
</comment>
<sequence>MIGIDIVSIARVEKCVKRFEMKFLERFLSPSEIVLCKDKTSSIAGFFALKEACSKALQVGIGKELSFLDIRISKSPKNAPLITLSKEKMDYFNIQSLSASISHDAGFAIAVVMVSSSNL</sequence>
<proteinExistence type="inferred from homology"/>
<dbReference type="EC" id="2.7.8.7" evidence="1"/>
<dbReference type="EMBL" id="CP001173">
    <property type="protein sequence ID" value="ACI27519.1"/>
    <property type="molecule type" value="Genomic_DNA"/>
</dbReference>
<dbReference type="RefSeq" id="WP_000579187.1">
    <property type="nucleotide sequence ID" value="NC_011333.1"/>
</dbReference>
<dbReference type="SMR" id="B5Z7H0"/>
<dbReference type="KEGG" id="hpg:HPG27_764"/>
<dbReference type="HOGENOM" id="CLU_089696_0_2_7"/>
<dbReference type="Proteomes" id="UP000001735">
    <property type="component" value="Chromosome"/>
</dbReference>
<dbReference type="GO" id="GO:0005737">
    <property type="term" value="C:cytoplasm"/>
    <property type="evidence" value="ECO:0007669"/>
    <property type="project" value="UniProtKB-SubCell"/>
</dbReference>
<dbReference type="GO" id="GO:0008897">
    <property type="term" value="F:holo-[acyl-carrier-protein] synthase activity"/>
    <property type="evidence" value="ECO:0007669"/>
    <property type="project" value="UniProtKB-UniRule"/>
</dbReference>
<dbReference type="GO" id="GO:0000287">
    <property type="term" value="F:magnesium ion binding"/>
    <property type="evidence" value="ECO:0007669"/>
    <property type="project" value="UniProtKB-UniRule"/>
</dbReference>
<dbReference type="GO" id="GO:0006633">
    <property type="term" value="P:fatty acid biosynthetic process"/>
    <property type="evidence" value="ECO:0007669"/>
    <property type="project" value="UniProtKB-UniRule"/>
</dbReference>
<dbReference type="Gene3D" id="3.90.470.20">
    <property type="entry name" value="4'-phosphopantetheinyl transferase domain"/>
    <property type="match status" value="1"/>
</dbReference>
<dbReference type="HAMAP" id="MF_00101">
    <property type="entry name" value="AcpS"/>
    <property type="match status" value="1"/>
</dbReference>
<dbReference type="InterPro" id="IPR008278">
    <property type="entry name" value="4-PPantetheinyl_Trfase_dom"/>
</dbReference>
<dbReference type="InterPro" id="IPR037143">
    <property type="entry name" value="4-PPantetheinyl_Trfase_dom_sf"/>
</dbReference>
<dbReference type="InterPro" id="IPR002582">
    <property type="entry name" value="ACPS"/>
</dbReference>
<dbReference type="InterPro" id="IPR004568">
    <property type="entry name" value="Ppantetheine-prot_Trfase_dom"/>
</dbReference>
<dbReference type="NCBIfam" id="TIGR00516">
    <property type="entry name" value="acpS"/>
    <property type="match status" value="1"/>
</dbReference>
<dbReference type="NCBIfam" id="TIGR00556">
    <property type="entry name" value="pantethn_trn"/>
    <property type="match status" value="1"/>
</dbReference>
<dbReference type="Pfam" id="PF01648">
    <property type="entry name" value="ACPS"/>
    <property type="match status" value="1"/>
</dbReference>
<dbReference type="SUPFAM" id="SSF56214">
    <property type="entry name" value="4'-phosphopantetheinyl transferase"/>
    <property type="match status" value="1"/>
</dbReference>